<accession>Q7W3U5</accession>
<dbReference type="EMBL" id="BX640435">
    <property type="protein sequence ID" value="CAE39215.1"/>
    <property type="status" value="ALT_INIT"/>
    <property type="molecule type" value="Genomic_DNA"/>
</dbReference>
<dbReference type="RefSeq" id="WP_010927118.1">
    <property type="nucleotide sequence ID" value="NC_002928.3"/>
</dbReference>
<dbReference type="SMR" id="Q7W3U5"/>
<dbReference type="GeneID" id="69603429"/>
<dbReference type="KEGG" id="bpa:BPP3932"/>
<dbReference type="HOGENOM" id="CLU_057596_1_0_4"/>
<dbReference type="Proteomes" id="UP000001421">
    <property type="component" value="Chromosome"/>
</dbReference>
<dbReference type="GO" id="GO:0005829">
    <property type="term" value="C:cytosol"/>
    <property type="evidence" value="ECO:0007669"/>
    <property type="project" value="TreeGrafter"/>
</dbReference>
<dbReference type="Gene3D" id="3.40.1740.10">
    <property type="entry name" value="VC0467-like"/>
    <property type="match status" value="1"/>
</dbReference>
<dbReference type="HAMAP" id="MF_00758">
    <property type="entry name" value="UPF0301"/>
    <property type="match status" value="1"/>
</dbReference>
<dbReference type="InterPro" id="IPR003774">
    <property type="entry name" value="AlgH-like"/>
</dbReference>
<dbReference type="NCBIfam" id="NF001266">
    <property type="entry name" value="PRK00228.1-1"/>
    <property type="match status" value="1"/>
</dbReference>
<dbReference type="NCBIfam" id="NF001267">
    <property type="entry name" value="PRK00228.1-2"/>
    <property type="match status" value="1"/>
</dbReference>
<dbReference type="PANTHER" id="PTHR30327">
    <property type="entry name" value="UNCHARACTERIZED PROTEIN YQGE"/>
    <property type="match status" value="1"/>
</dbReference>
<dbReference type="PANTHER" id="PTHR30327:SF1">
    <property type="entry name" value="UPF0301 PROTEIN YQGE"/>
    <property type="match status" value="1"/>
</dbReference>
<dbReference type="Pfam" id="PF02622">
    <property type="entry name" value="DUF179"/>
    <property type="match status" value="1"/>
</dbReference>
<dbReference type="SUPFAM" id="SSF143456">
    <property type="entry name" value="VC0467-like"/>
    <property type="match status" value="1"/>
</dbReference>
<organism>
    <name type="scientific">Bordetella parapertussis (strain 12822 / ATCC BAA-587 / NCTC 13253)</name>
    <dbReference type="NCBI Taxonomy" id="257311"/>
    <lineage>
        <taxon>Bacteria</taxon>
        <taxon>Pseudomonadati</taxon>
        <taxon>Pseudomonadota</taxon>
        <taxon>Betaproteobacteria</taxon>
        <taxon>Burkholderiales</taxon>
        <taxon>Alcaligenaceae</taxon>
        <taxon>Bordetella</taxon>
    </lineage>
</organism>
<proteinExistence type="inferred from homology"/>
<feature type="chain" id="PRO_0000214307" description="UPF0301 protein BPP3932">
    <location>
        <begin position="1"/>
        <end position="201"/>
    </location>
</feature>
<sequence length="201" mass="21337">MTDSHRPDADDIPDDDELSTDFSNQFLLAMPGVVEGSLAGTVIYICEHTRRGALGLVINRPTDLTLATLFERIDLKLEIGPVKDEMVFFGGPVQTDRGFVLHAPAGDYTSSINLGELALTTSRDVLQAVADGNGPARMLVTLGYAGWGAGQLESEMAQNSWLSVGADSHIIFDVAPEDRYPAALKLLGVDPVMLAGGAGHA</sequence>
<reference key="1">
    <citation type="journal article" date="2003" name="Nat. Genet.">
        <title>Comparative analysis of the genome sequences of Bordetella pertussis, Bordetella parapertussis and Bordetella bronchiseptica.</title>
        <authorList>
            <person name="Parkhill J."/>
            <person name="Sebaihia M."/>
            <person name="Preston A."/>
            <person name="Murphy L.D."/>
            <person name="Thomson N.R."/>
            <person name="Harris D.E."/>
            <person name="Holden M.T.G."/>
            <person name="Churcher C.M."/>
            <person name="Bentley S.D."/>
            <person name="Mungall K.L."/>
            <person name="Cerdeno-Tarraga A.-M."/>
            <person name="Temple L."/>
            <person name="James K.D."/>
            <person name="Harris B."/>
            <person name="Quail M.A."/>
            <person name="Achtman M."/>
            <person name="Atkin R."/>
            <person name="Baker S."/>
            <person name="Basham D."/>
            <person name="Bason N."/>
            <person name="Cherevach I."/>
            <person name="Chillingworth T."/>
            <person name="Collins M."/>
            <person name="Cronin A."/>
            <person name="Davis P."/>
            <person name="Doggett J."/>
            <person name="Feltwell T."/>
            <person name="Goble A."/>
            <person name="Hamlin N."/>
            <person name="Hauser H."/>
            <person name="Holroyd S."/>
            <person name="Jagels K."/>
            <person name="Leather S."/>
            <person name="Moule S."/>
            <person name="Norberczak H."/>
            <person name="O'Neil S."/>
            <person name="Ormond D."/>
            <person name="Price C."/>
            <person name="Rabbinowitsch E."/>
            <person name="Rutter S."/>
            <person name="Sanders M."/>
            <person name="Saunders D."/>
            <person name="Seeger K."/>
            <person name="Sharp S."/>
            <person name="Simmonds M."/>
            <person name="Skelton J."/>
            <person name="Squares R."/>
            <person name="Squares S."/>
            <person name="Stevens K."/>
            <person name="Unwin L."/>
            <person name="Whitehead S."/>
            <person name="Barrell B.G."/>
            <person name="Maskell D.J."/>
        </authorList>
    </citation>
    <scope>NUCLEOTIDE SEQUENCE [LARGE SCALE GENOMIC DNA]</scope>
    <source>
        <strain>12822 / ATCC BAA-587 / NCTC 13253</strain>
    </source>
</reference>
<comment type="similarity">
    <text evidence="1">Belongs to the UPF0301 (AlgH) family.</text>
</comment>
<comment type="sequence caution" evidence="2">
    <conflict type="erroneous initiation">
        <sequence resource="EMBL-CDS" id="CAE39215"/>
    </conflict>
</comment>
<gene>
    <name type="ordered locus">BPP3932</name>
</gene>
<name>Y3932_BORPA</name>
<protein>
    <recommendedName>
        <fullName evidence="1">UPF0301 protein BPP3932</fullName>
    </recommendedName>
</protein>
<evidence type="ECO:0000255" key="1">
    <source>
        <dbReference type="HAMAP-Rule" id="MF_00758"/>
    </source>
</evidence>
<evidence type="ECO:0000305" key="2"/>